<keyword id="KW-0025">Alternative splicing</keyword>
<keyword id="KW-1015">Disulfide bond</keyword>
<keyword id="KW-0325">Glycoprotein</keyword>
<keyword id="KW-0378">Hydrolase</keyword>
<keyword id="KW-0645">Protease</keyword>
<keyword id="KW-1267">Proteomics identification</keyword>
<keyword id="KW-1185">Reference proteome</keyword>
<keyword id="KW-0964">Secreted</keyword>
<keyword id="KW-0720">Serine protease</keyword>
<keyword id="KW-0732">Signal</keyword>
<protein>
    <recommendedName>
        <fullName>Kallikrein-13</fullName>
        <ecNumber>3.4.21.-</ecNumber>
    </recommendedName>
    <alternativeName>
        <fullName>Kallikrein-like protein 4</fullName>
        <shortName>KLK-L4</shortName>
    </alternativeName>
</protein>
<name>KLK13_HUMAN</name>
<comment type="subcellular location">
    <subcellularLocation>
        <location evidence="5">Secreted</location>
    </subcellularLocation>
</comment>
<comment type="alternative products">
    <event type="alternative splicing"/>
    <isoform>
        <id>Q9UKR3-1</id>
        <name>1</name>
        <sequence type="displayed"/>
    </isoform>
    <isoform>
        <id>Q9UKR3-2</id>
        <name>2</name>
        <sequence type="described" ref="VSP_056631"/>
    </isoform>
</comment>
<comment type="tissue specificity">
    <text>Expressed in prostate, breast, testis and salivary gland.</text>
</comment>
<comment type="similarity">
    <text evidence="3">Belongs to the peptidase S1 family. Kallikrein subfamily.</text>
</comment>
<accession>Q9UKR3</accession>
<accession>A7UNK6</accession>
<accession>Q86VI8</accession>
<accession>Q9Y433</accession>
<reference key="1">
    <citation type="journal article" date="2000" name="J. Biol. Chem.">
        <title>Identification and characterization of KLK-L4, a new kallikrein-like gene that appears to be down-regulated in breast cancer tissues.</title>
        <authorList>
            <person name="Yousef G.M."/>
            <person name="Chang A."/>
            <person name="Diamandis E.P."/>
        </authorList>
    </citation>
    <scope>NUCLEOTIDE SEQUENCE [GENOMIC DNA]</scope>
</reference>
<reference key="2">
    <citation type="journal article" date="2003" name="J. Invest. Dermatol.">
        <title>Expression and localization of tissue kallikrein mRNAs in human epidermis and appendages.</title>
        <authorList>
            <person name="Komatsu N."/>
            <person name="Takata M."/>
            <person name="Otsuki N."/>
            <person name="Toyama T."/>
            <person name="Ohka R."/>
            <person name="Takehara K."/>
            <person name="Saijoh K."/>
        </authorList>
    </citation>
    <scope>NUCLEOTIDE SEQUENCE [MRNA] (ISOFORM 2)</scope>
    <scope>ALTERNATIVE SPLICING</scope>
    <source>
        <tissue>Skin</tissue>
    </source>
</reference>
<reference key="3">
    <citation type="journal article" date="2007" name="Genet. Epidemiol.">
        <title>Understanding the accuracy of statistical haplotype inference with sequence data of known phase.</title>
        <authorList>
            <person name="Andres A.M."/>
            <person name="Clark A.G."/>
            <person name="Shimmin L."/>
            <person name="Boerwinkle E."/>
            <person name="Sing C.F."/>
            <person name="Hixson J.E."/>
        </authorList>
    </citation>
    <scope>NUCLEOTIDE SEQUENCE [GENOMIC DNA]</scope>
</reference>
<reference key="4">
    <citation type="journal article" date="2004" name="Nature">
        <title>The DNA sequence and biology of human chromosome 19.</title>
        <authorList>
            <person name="Grimwood J."/>
            <person name="Gordon L.A."/>
            <person name="Olsen A.S."/>
            <person name="Terry A."/>
            <person name="Schmutz J."/>
            <person name="Lamerdin J.E."/>
            <person name="Hellsten U."/>
            <person name="Goodstein D."/>
            <person name="Couronne O."/>
            <person name="Tran-Gyamfi M."/>
            <person name="Aerts A."/>
            <person name="Altherr M."/>
            <person name="Ashworth L."/>
            <person name="Bajorek E."/>
            <person name="Black S."/>
            <person name="Branscomb E."/>
            <person name="Caenepeel S."/>
            <person name="Carrano A.V."/>
            <person name="Caoile C."/>
            <person name="Chan Y.M."/>
            <person name="Christensen M."/>
            <person name="Cleland C.A."/>
            <person name="Copeland A."/>
            <person name="Dalin E."/>
            <person name="Dehal P."/>
            <person name="Denys M."/>
            <person name="Detter J.C."/>
            <person name="Escobar J."/>
            <person name="Flowers D."/>
            <person name="Fotopulos D."/>
            <person name="Garcia C."/>
            <person name="Georgescu A.M."/>
            <person name="Glavina T."/>
            <person name="Gomez M."/>
            <person name="Gonzales E."/>
            <person name="Groza M."/>
            <person name="Hammon N."/>
            <person name="Hawkins T."/>
            <person name="Haydu L."/>
            <person name="Ho I."/>
            <person name="Huang W."/>
            <person name="Israni S."/>
            <person name="Jett J."/>
            <person name="Kadner K."/>
            <person name="Kimball H."/>
            <person name="Kobayashi A."/>
            <person name="Larionov V."/>
            <person name="Leem S.-H."/>
            <person name="Lopez F."/>
            <person name="Lou Y."/>
            <person name="Lowry S."/>
            <person name="Malfatti S."/>
            <person name="Martinez D."/>
            <person name="McCready P.M."/>
            <person name="Medina C."/>
            <person name="Morgan J."/>
            <person name="Nelson K."/>
            <person name="Nolan M."/>
            <person name="Ovcharenko I."/>
            <person name="Pitluck S."/>
            <person name="Pollard M."/>
            <person name="Popkie A.P."/>
            <person name="Predki P."/>
            <person name="Quan G."/>
            <person name="Ramirez L."/>
            <person name="Rash S."/>
            <person name="Retterer J."/>
            <person name="Rodriguez A."/>
            <person name="Rogers S."/>
            <person name="Salamov A."/>
            <person name="Salazar A."/>
            <person name="She X."/>
            <person name="Smith D."/>
            <person name="Slezak T."/>
            <person name="Solovyev V."/>
            <person name="Thayer N."/>
            <person name="Tice H."/>
            <person name="Tsai M."/>
            <person name="Ustaszewska A."/>
            <person name="Vo N."/>
            <person name="Wagner M."/>
            <person name="Wheeler J."/>
            <person name="Wu K."/>
            <person name="Xie G."/>
            <person name="Yang J."/>
            <person name="Dubchak I."/>
            <person name="Furey T.S."/>
            <person name="DeJong P."/>
            <person name="Dickson M."/>
            <person name="Gordon D."/>
            <person name="Eichler E.E."/>
            <person name="Pennacchio L.A."/>
            <person name="Richardson P."/>
            <person name="Stubbs L."/>
            <person name="Rokhsar D.S."/>
            <person name="Myers R.M."/>
            <person name="Rubin E.M."/>
            <person name="Lucas S.M."/>
        </authorList>
    </citation>
    <scope>NUCLEOTIDE SEQUENCE [LARGE SCALE GENOMIC DNA]</scope>
</reference>
<reference key="5">
    <citation type="submission" date="2005-07" db="EMBL/GenBank/DDBJ databases">
        <authorList>
            <person name="Mural R.J."/>
            <person name="Istrail S."/>
            <person name="Sutton G.G."/>
            <person name="Florea L."/>
            <person name="Halpern A.L."/>
            <person name="Mobarry C.M."/>
            <person name="Lippert R."/>
            <person name="Walenz B."/>
            <person name="Shatkay H."/>
            <person name="Dew I."/>
            <person name="Miller J.R."/>
            <person name="Flanigan M.J."/>
            <person name="Edwards N.J."/>
            <person name="Bolanos R."/>
            <person name="Fasulo D."/>
            <person name="Halldorsson B.V."/>
            <person name="Hannenhalli S."/>
            <person name="Turner R."/>
            <person name="Yooseph S."/>
            <person name="Lu F."/>
            <person name="Nusskern D.R."/>
            <person name="Shue B.C."/>
            <person name="Zheng X.H."/>
            <person name="Zhong F."/>
            <person name="Delcher A.L."/>
            <person name="Huson D.H."/>
            <person name="Kravitz S.A."/>
            <person name="Mouchard L."/>
            <person name="Reinert K."/>
            <person name="Remington K.A."/>
            <person name="Clark A.G."/>
            <person name="Waterman M.S."/>
            <person name="Eichler E.E."/>
            <person name="Adams M.D."/>
            <person name="Hunkapiller M.W."/>
            <person name="Myers E.W."/>
            <person name="Venter J.C."/>
        </authorList>
    </citation>
    <scope>NUCLEOTIDE SEQUENCE [LARGE SCALE GENOMIC DNA]</scope>
</reference>
<reference key="6">
    <citation type="journal article" date="2004" name="Genome Res.">
        <title>The status, quality, and expansion of the NIH full-length cDNA project: the Mammalian Gene Collection (MGC).</title>
        <authorList>
            <consortium name="The MGC Project Team"/>
        </authorList>
    </citation>
    <scope>NUCLEOTIDE SEQUENCE [LARGE SCALE MRNA] (ISOFORM 1)</scope>
</reference>
<reference key="7">
    <citation type="journal article" date="2007" name="BMC Genomics">
        <title>The full-ORF clone resource of the German cDNA consortium.</title>
        <authorList>
            <person name="Bechtel S."/>
            <person name="Rosenfelder H."/>
            <person name="Duda A."/>
            <person name="Schmidt C.P."/>
            <person name="Ernst U."/>
            <person name="Wellenreuther R."/>
            <person name="Mehrle A."/>
            <person name="Schuster C."/>
            <person name="Bahr A."/>
            <person name="Bloecker H."/>
            <person name="Heubner D."/>
            <person name="Hoerlein A."/>
            <person name="Michel G."/>
            <person name="Wedler H."/>
            <person name="Koehrer K."/>
            <person name="Ottenwaelder B."/>
            <person name="Poustka A."/>
            <person name="Wiemann S."/>
            <person name="Schupp I."/>
        </authorList>
    </citation>
    <scope>NUCLEOTIDE SEQUENCE [LARGE SCALE MRNA] OF 1-169 (ISOFORM 1)</scope>
    <source>
        <tissue>Uterus</tissue>
    </source>
</reference>
<dbReference type="EC" id="3.4.21.-"/>
<dbReference type="EMBL" id="AF135024">
    <property type="protein sequence ID" value="AAD26425.2"/>
    <property type="molecule type" value="Genomic_DNA"/>
</dbReference>
<dbReference type="EMBL" id="AB108823">
    <property type="protein sequence ID" value="BAC75825.1"/>
    <property type="molecule type" value="mRNA"/>
</dbReference>
<dbReference type="EMBL" id="EU091477">
    <property type="protein sequence ID" value="ABU63130.1"/>
    <property type="molecule type" value="Genomic_DNA"/>
</dbReference>
<dbReference type="EMBL" id="AC011473">
    <property type="protein sequence ID" value="AAG23259.1"/>
    <property type="molecule type" value="Genomic_DNA"/>
</dbReference>
<dbReference type="EMBL" id="CH471135">
    <property type="protein sequence ID" value="EAW71979.1"/>
    <property type="molecule type" value="Genomic_DNA"/>
</dbReference>
<dbReference type="EMBL" id="BC069334">
    <property type="protein sequence ID" value="AAH69334.1"/>
    <property type="molecule type" value="mRNA"/>
</dbReference>
<dbReference type="EMBL" id="BC069543">
    <property type="protein sequence ID" value="AAH69543.1"/>
    <property type="molecule type" value="mRNA"/>
</dbReference>
<dbReference type="EMBL" id="AL050220">
    <property type="protein sequence ID" value="CAB43320.2"/>
    <property type="molecule type" value="mRNA"/>
</dbReference>
<dbReference type="CCDS" id="CCDS12822.1">
    <molecule id="Q9UKR3-1"/>
</dbReference>
<dbReference type="CCDS" id="CCDS86794.1">
    <molecule id="Q9UKR3-2"/>
</dbReference>
<dbReference type="PIR" id="T08808">
    <property type="entry name" value="T08808"/>
</dbReference>
<dbReference type="RefSeq" id="NP_001335107.1">
    <molecule id="Q9UKR3-2"/>
    <property type="nucleotide sequence ID" value="NM_001348178.2"/>
</dbReference>
<dbReference type="RefSeq" id="NP_056411.1">
    <molecule id="Q9UKR3-1"/>
    <property type="nucleotide sequence ID" value="NM_015596.3"/>
</dbReference>
<dbReference type="RefSeq" id="XP_047294534.1">
    <molecule id="Q9UKR3-1"/>
    <property type="nucleotide sequence ID" value="XM_047438578.1"/>
</dbReference>
<dbReference type="RefSeq" id="XP_054176468.1">
    <molecule id="Q9UKR3-1"/>
    <property type="nucleotide sequence ID" value="XM_054320493.1"/>
</dbReference>
<dbReference type="SMR" id="Q9UKR3"/>
<dbReference type="BioGRID" id="117538">
    <property type="interactions" value="19"/>
</dbReference>
<dbReference type="FunCoup" id="Q9UKR3">
    <property type="interactions" value="84"/>
</dbReference>
<dbReference type="IntAct" id="Q9UKR3">
    <property type="interactions" value="7"/>
</dbReference>
<dbReference type="STRING" id="9606.ENSP00000470555"/>
<dbReference type="BindingDB" id="Q9UKR3"/>
<dbReference type="ChEMBL" id="CHEMBL4863"/>
<dbReference type="MEROPS" id="S01.306"/>
<dbReference type="GlyCosmos" id="Q9UKR3">
    <property type="glycosylation" value="2 sites, No reported glycans"/>
</dbReference>
<dbReference type="GlyGen" id="Q9UKR3">
    <property type="glycosylation" value="2 sites"/>
</dbReference>
<dbReference type="iPTMnet" id="Q9UKR3"/>
<dbReference type="PhosphoSitePlus" id="Q9UKR3"/>
<dbReference type="BioMuta" id="KLK13"/>
<dbReference type="DMDM" id="9296990"/>
<dbReference type="jPOST" id="Q9UKR3"/>
<dbReference type="MassIVE" id="Q9UKR3"/>
<dbReference type="PaxDb" id="9606-ENSP00000470555"/>
<dbReference type="PeptideAtlas" id="Q9UKR3"/>
<dbReference type="ProteomicsDB" id="70027"/>
<dbReference type="ProteomicsDB" id="84840">
    <molecule id="Q9UKR3-1"/>
</dbReference>
<dbReference type="Antibodypedia" id="18982">
    <property type="antibodies" value="281 antibodies from 32 providers"/>
</dbReference>
<dbReference type="DNASU" id="26085"/>
<dbReference type="Ensembl" id="ENST00000335422.3">
    <molecule id="Q9UKR3-2"/>
    <property type="protein sequence ID" value="ENSP00000334079.3"/>
    <property type="gene ID" value="ENSG00000167759.13"/>
</dbReference>
<dbReference type="Ensembl" id="ENST00000595793.6">
    <molecule id="Q9UKR3-1"/>
    <property type="protein sequence ID" value="ENSP00000470555.1"/>
    <property type="gene ID" value="ENSG00000167759.13"/>
</dbReference>
<dbReference type="GeneID" id="26085"/>
<dbReference type="KEGG" id="hsa:26085"/>
<dbReference type="MANE-Select" id="ENST00000595793.6">
    <property type="protein sequence ID" value="ENSP00000470555.1"/>
    <property type="RefSeq nucleotide sequence ID" value="NM_015596.3"/>
    <property type="RefSeq protein sequence ID" value="NP_056411.1"/>
</dbReference>
<dbReference type="UCSC" id="uc002pvn.4">
    <molecule id="Q9UKR3-1"/>
    <property type="organism name" value="human"/>
</dbReference>
<dbReference type="AGR" id="HGNC:6361"/>
<dbReference type="CTD" id="26085"/>
<dbReference type="DisGeNET" id="26085"/>
<dbReference type="GeneCards" id="KLK13"/>
<dbReference type="HGNC" id="HGNC:6361">
    <property type="gene designation" value="KLK13"/>
</dbReference>
<dbReference type="HPA" id="ENSG00000167759">
    <property type="expression patterns" value="Tissue enriched (esophagus)"/>
</dbReference>
<dbReference type="MIM" id="605505">
    <property type="type" value="gene"/>
</dbReference>
<dbReference type="neXtProt" id="NX_Q9UKR3"/>
<dbReference type="OpenTargets" id="ENSG00000167759"/>
<dbReference type="PharmGKB" id="PA30150"/>
<dbReference type="VEuPathDB" id="HostDB:ENSG00000167759"/>
<dbReference type="eggNOG" id="KOG3627">
    <property type="taxonomic scope" value="Eukaryota"/>
</dbReference>
<dbReference type="GeneTree" id="ENSGT01030000234551"/>
<dbReference type="HOGENOM" id="CLU_006842_13_2_1"/>
<dbReference type="InParanoid" id="Q9UKR3"/>
<dbReference type="OMA" id="TNHIRVL"/>
<dbReference type="OrthoDB" id="10059102at2759"/>
<dbReference type="PAN-GO" id="Q9UKR3">
    <property type="GO annotations" value="1 GO annotation based on evolutionary models"/>
</dbReference>
<dbReference type="PhylomeDB" id="Q9UKR3"/>
<dbReference type="TreeFam" id="TF331065"/>
<dbReference type="BRENDA" id="3.4.21.119">
    <property type="organism ID" value="2681"/>
</dbReference>
<dbReference type="PathwayCommons" id="Q9UKR3"/>
<dbReference type="Reactome" id="R-HSA-381426">
    <property type="pathway name" value="Regulation of Insulin-like Growth Factor (IGF) transport and uptake by Insulin-like Growth Factor Binding Proteins (IGFBPs)"/>
</dbReference>
<dbReference type="Reactome" id="R-HSA-6809371">
    <property type="pathway name" value="Formation of the cornified envelope"/>
</dbReference>
<dbReference type="SignaLink" id="Q9UKR3"/>
<dbReference type="BioGRID-ORCS" id="26085">
    <property type="hits" value="13 hits in 1151 CRISPR screens"/>
</dbReference>
<dbReference type="ChiTaRS" id="KLK13">
    <property type="organism name" value="human"/>
</dbReference>
<dbReference type="GeneWiki" id="KLK13"/>
<dbReference type="GenomeRNAi" id="26085"/>
<dbReference type="Pharos" id="Q9UKR3">
    <property type="development level" value="Tchem"/>
</dbReference>
<dbReference type="PRO" id="PR:Q9UKR3"/>
<dbReference type="Proteomes" id="UP000005640">
    <property type="component" value="Chromosome 19"/>
</dbReference>
<dbReference type="RNAct" id="Q9UKR3">
    <property type="molecule type" value="protein"/>
</dbReference>
<dbReference type="Bgee" id="ENSG00000167759">
    <property type="expression patterns" value="Expressed in lower esophagus mucosa and 116 other cell types or tissues"/>
</dbReference>
<dbReference type="ExpressionAtlas" id="Q9UKR3">
    <property type="expression patterns" value="baseline and differential"/>
</dbReference>
<dbReference type="GO" id="GO:0005737">
    <property type="term" value="C:cytoplasm"/>
    <property type="evidence" value="ECO:0000314"/>
    <property type="project" value="UniProtKB"/>
</dbReference>
<dbReference type="GO" id="GO:0005576">
    <property type="term" value="C:extracellular region"/>
    <property type="evidence" value="ECO:0000304"/>
    <property type="project" value="UniProtKB"/>
</dbReference>
<dbReference type="GO" id="GO:0005615">
    <property type="term" value="C:extracellular space"/>
    <property type="evidence" value="ECO:0000318"/>
    <property type="project" value="GO_Central"/>
</dbReference>
<dbReference type="GO" id="GO:0030141">
    <property type="term" value="C:secretory granule"/>
    <property type="evidence" value="ECO:0000318"/>
    <property type="project" value="GO_Central"/>
</dbReference>
<dbReference type="GO" id="GO:0016787">
    <property type="term" value="F:hydrolase activity"/>
    <property type="evidence" value="ECO:0000314"/>
    <property type="project" value="UniProtKB"/>
</dbReference>
<dbReference type="GO" id="GO:0004252">
    <property type="term" value="F:serine-type endopeptidase activity"/>
    <property type="evidence" value="ECO:0000318"/>
    <property type="project" value="GO_Central"/>
</dbReference>
<dbReference type="GO" id="GO:0051604">
    <property type="term" value="P:protein maturation"/>
    <property type="evidence" value="ECO:0000318"/>
    <property type="project" value="GO_Central"/>
</dbReference>
<dbReference type="GO" id="GO:0016485">
    <property type="term" value="P:protein processing"/>
    <property type="evidence" value="ECO:0007669"/>
    <property type="project" value="Ensembl"/>
</dbReference>
<dbReference type="GO" id="GO:0006508">
    <property type="term" value="P:proteolysis"/>
    <property type="evidence" value="ECO:0000303"/>
    <property type="project" value="UniProtKB"/>
</dbReference>
<dbReference type="CDD" id="cd00190">
    <property type="entry name" value="Tryp_SPc"/>
    <property type="match status" value="1"/>
</dbReference>
<dbReference type="FunFam" id="2.40.10.10:FF:000021">
    <property type="entry name" value="Kallikrein 1"/>
    <property type="match status" value="1"/>
</dbReference>
<dbReference type="FunFam" id="2.40.10.10:FF:000010">
    <property type="entry name" value="Kallikrein related peptidase 11"/>
    <property type="match status" value="1"/>
</dbReference>
<dbReference type="Gene3D" id="2.40.10.10">
    <property type="entry name" value="Trypsin-like serine proteases"/>
    <property type="match status" value="2"/>
</dbReference>
<dbReference type="InterPro" id="IPR009003">
    <property type="entry name" value="Peptidase_S1_PA"/>
</dbReference>
<dbReference type="InterPro" id="IPR043504">
    <property type="entry name" value="Peptidase_S1_PA_chymotrypsin"/>
</dbReference>
<dbReference type="InterPro" id="IPR001314">
    <property type="entry name" value="Peptidase_S1A"/>
</dbReference>
<dbReference type="InterPro" id="IPR001254">
    <property type="entry name" value="Trypsin_dom"/>
</dbReference>
<dbReference type="InterPro" id="IPR018114">
    <property type="entry name" value="TRYPSIN_HIS"/>
</dbReference>
<dbReference type="InterPro" id="IPR033116">
    <property type="entry name" value="TRYPSIN_SER"/>
</dbReference>
<dbReference type="PANTHER" id="PTHR24271:SF3">
    <property type="entry name" value="KALLIKREIN-13"/>
    <property type="match status" value="1"/>
</dbReference>
<dbReference type="PANTHER" id="PTHR24271">
    <property type="entry name" value="KALLIKREIN-RELATED"/>
    <property type="match status" value="1"/>
</dbReference>
<dbReference type="Pfam" id="PF00089">
    <property type="entry name" value="Trypsin"/>
    <property type="match status" value="1"/>
</dbReference>
<dbReference type="PRINTS" id="PR00722">
    <property type="entry name" value="CHYMOTRYPSIN"/>
</dbReference>
<dbReference type="SMART" id="SM00020">
    <property type="entry name" value="Tryp_SPc"/>
    <property type="match status" value="1"/>
</dbReference>
<dbReference type="SUPFAM" id="SSF50494">
    <property type="entry name" value="Trypsin-like serine proteases"/>
    <property type="match status" value="1"/>
</dbReference>
<dbReference type="PROSITE" id="PS50240">
    <property type="entry name" value="TRYPSIN_DOM"/>
    <property type="match status" value="1"/>
</dbReference>
<dbReference type="PROSITE" id="PS00134">
    <property type="entry name" value="TRYPSIN_HIS"/>
    <property type="match status" value="1"/>
</dbReference>
<dbReference type="PROSITE" id="PS00135">
    <property type="entry name" value="TRYPSIN_SER"/>
    <property type="match status" value="1"/>
</dbReference>
<evidence type="ECO:0000250" key="1"/>
<evidence type="ECO:0000255" key="2"/>
<evidence type="ECO:0000255" key="3">
    <source>
        <dbReference type="PROSITE-ProRule" id="PRU00274"/>
    </source>
</evidence>
<evidence type="ECO:0000303" key="4">
    <source>
    </source>
</evidence>
<evidence type="ECO:0000305" key="5"/>
<organism>
    <name type="scientific">Homo sapiens</name>
    <name type="common">Human</name>
    <dbReference type="NCBI Taxonomy" id="9606"/>
    <lineage>
        <taxon>Eukaryota</taxon>
        <taxon>Metazoa</taxon>
        <taxon>Chordata</taxon>
        <taxon>Craniata</taxon>
        <taxon>Vertebrata</taxon>
        <taxon>Euteleostomi</taxon>
        <taxon>Mammalia</taxon>
        <taxon>Eutheria</taxon>
        <taxon>Euarchontoglires</taxon>
        <taxon>Primates</taxon>
        <taxon>Haplorrhini</taxon>
        <taxon>Catarrhini</taxon>
        <taxon>Hominidae</taxon>
        <taxon>Homo</taxon>
    </lineage>
</organism>
<gene>
    <name type="primary">KLK13</name>
    <name type="synonym">KLKL4</name>
</gene>
<feature type="signal peptide" evidence="2">
    <location>
        <begin position="1"/>
        <end position="16"/>
    </location>
</feature>
<feature type="chain" id="PRO_0000027957" description="Kallikrein-13">
    <location>
        <begin position="17"/>
        <end position="277"/>
    </location>
</feature>
<feature type="domain" description="Peptidase S1" evidence="3">
    <location>
        <begin position="36"/>
        <end position="263"/>
    </location>
</feature>
<feature type="active site" description="Charge relay system" evidence="1">
    <location>
        <position position="76"/>
    </location>
</feature>
<feature type="active site" description="Charge relay system" evidence="1">
    <location>
        <position position="124"/>
    </location>
</feature>
<feature type="active site" description="Charge relay system" evidence="1">
    <location>
        <position position="218"/>
    </location>
</feature>
<feature type="glycosylation site" description="N-linked (GlcNAc...) asparagine" evidence="2">
    <location>
        <position position="30"/>
    </location>
</feature>
<feature type="glycosylation site" description="N-linked (GlcNAc...) asparagine" evidence="2">
    <location>
        <position position="225"/>
    </location>
</feature>
<feature type="disulfide bond" evidence="3">
    <location>
        <begin position="42"/>
        <end position="178"/>
    </location>
</feature>
<feature type="disulfide bond" evidence="3">
    <location>
        <begin position="61"/>
        <end position="77"/>
    </location>
</feature>
<feature type="disulfide bond" evidence="3">
    <location>
        <begin position="157"/>
        <end position="224"/>
    </location>
</feature>
<feature type="disulfide bond" evidence="3">
    <location>
        <begin position="189"/>
        <end position="203"/>
    </location>
</feature>
<feature type="disulfide bond" evidence="3">
    <location>
        <begin position="214"/>
        <end position="239"/>
    </location>
</feature>
<feature type="splice variant" id="VSP_056631" description="In isoform 2." evidence="4">
    <location>
        <begin position="18"/>
        <end position="169"/>
    </location>
</feature>
<feature type="sequence variant" id="VAR_051857" description="In dbSNP:rs34089525.">
    <original>H</original>
    <variation>Y</variation>
    <location>
        <position position="109"/>
    </location>
</feature>
<sequence>MWPLALVIASLTLALSGGVSQESSKVLNTNGTSGFLPGGYTCFPHSQPWQAALLVQGRLLCGGVLVHPKWVLTAAHCLKEGLKVYLGKHALGRVEAGEQVREVVHSIPHPEYRRSPTHLNHDHDIMLLELQSPVQLTGYIQTLPLSHNNRLTPGTTCRVSGWGTTTSPQVNYPKTLQCANIQLRSDEECRQVYPGKITDNMLCAGTKEGGKDSCEGDSGGPLVCNRTLYGIVSWGDFPCGQPDRPGVYTRVSRYVLWIRETIRKYETQQQKWLKGPQ</sequence>
<proteinExistence type="evidence at protein level"/>